<organism>
    <name type="scientific">Staphylococcus aureus (strain N315)</name>
    <dbReference type="NCBI Taxonomy" id="158879"/>
    <lineage>
        <taxon>Bacteria</taxon>
        <taxon>Bacillati</taxon>
        <taxon>Bacillota</taxon>
        <taxon>Bacilli</taxon>
        <taxon>Bacillales</taxon>
        <taxon>Staphylococcaceae</taxon>
        <taxon>Staphylococcus</taxon>
    </lineage>
</organism>
<protein>
    <recommendedName>
        <fullName evidence="1">Glycerol-3-phosphate dehydrogenase [NAD(P)+]</fullName>
        <ecNumber evidence="1">1.1.1.94</ecNumber>
    </recommendedName>
    <alternativeName>
        <fullName evidence="1">NAD(P)(+)-dependent glycerol-3-phosphate dehydrogenase</fullName>
    </alternativeName>
    <alternativeName>
        <fullName evidence="1">NAD(P)H-dependent dihydroxyacetone-phosphate reductase</fullName>
    </alternativeName>
</protein>
<evidence type="ECO:0000255" key="1">
    <source>
        <dbReference type="HAMAP-Rule" id="MF_00394"/>
    </source>
</evidence>
<comment type="function">
    <text evidence="1">Catalyzes the reduction of the glycolytic intermediate dihydroxyacetone phosphate (DHAP) to sn-glycerol 3-phosphate (G3P), the key precursor for phospholipid synthesis.</text>
</comment>
<comment type="catalytic activity">
    <reaction evidence="1">
        <text>sn-glycerol 3-phosphate + NAD(+) = dihydroxyacetone phosphate + NADH + H(+)</text>
        <dbReference type="Rhea" id="RHEA:11092"/>
        <dbReference type="ChEBI" id="CHEBI:15378"/>
        <dbReference type="ChEBI" id="CHEBI:57540"/>
        <dbReference type="ChEBI" id="CHEBI:57597"/>
        <dbReference type="ChEBI" id="CHEBI:57642"/>
        <dbReference type="ChEBI" id="CHEBI:57945"/>
        <dbReference type="EC" id="1.1.1.94"/>
    </reaction>
    <physiologicalReaction direction="right-to-left" evidence="1">
        <dbReference type="Rhea" id="RHEA:11094"/>
    </physiologicalReaction>
</comment>
<comment type="catalytic activity">
    <reaction evidence="1">
        <text>sn-glycerol 3-phosphate + NADP(+) = dihydroxyacetone phosphate + NADPH + H(+)</text>
        <dbReference type="Rhea" id="RHEA:11096"/>
        <dbReference type="ChEBI" id="CHEBI:15378"/>
        <dbReference type="ChEBI" id="CHEBI:57597"/>
        <dbReference type="ChEBI" id="CHEBI:57642"/>
        <dbReference type="ChEBI" id="CHEBI:57783"/>
        <dbReference type="ChEBI" id="CHEBI:58349"/>
        <dbReference type="EC" id="1.1.1.94"/>
    </reaction>
    <physiologicalReaction direction="right-to-left" evidence="1">
        <dbReference type="Rhea" id="RHEA:11098"/>
    </physiologicalReaction>
</comment>
<comment type="pathway">
    <text evidence="1">Membrane lipid metabolism; glycerophospholipid metabolism.</text>
</comment>
<comment type="subcellular location">
    <subcellularLocation>
        <location evidence="1">Cytoplasm</location>
    </subcellularLocation>
</comment>
<comment type="similarity">
    <text evidence="1">Belongs to the NAD-dependent glycerol-3-phosphate dehydrogenase family.</text>
</comment>
<keyword id="KW-0963">Cytoplasm</keyword>
<keyword id="KW-0444">Lipid biosynthesis</keyword>
<keyword id="KW-0443">Lipid metabolism</keyword>
<keyword id="KW-0520">NAD</keyword>
<keyword id="KW-0521">NADP</keyword>
<keyword id="KW-0547">Nucleotide-binding</keyword>
<keyword id="KW-0560">Oxidoreductase</keyword>
<keyword id="KW-0594">Phospholipid biosynthesis</keyword>
<keyword id="KW-1208">Phospholipid metabolism</keyword>
<dbReference type="EC" id="1.1.1.94" evidence="1"/>
<dbReference type="EMBL" id="BA000018">
    <property type="protein sequence ID" value="BAB42567.1"/>
    <property type="molecule type" value="Genomic_DNA"/>
</dbReference>
<dbReference type="PIR" id="B89926">
    <property type="entry name" value="B89926"/>
</dbReference>
<dbReference type="RefSeq" id="WP_000161745.1">
    <property type="nucleotide sequence ID" value="NC_002745.2"/>
</dbReference>
<dbReference type="SMR" id="P64191"/>
<dbReference type="EnsemblBacteria" id="BAB42567">
    <property type="protein sequence ID" value="BAB42567"/>
    <property type="gene ID" value="BAB42567"/>
</dbReference>
<dbReference type="KEGG" id="sau:SA1306"/>
<dbReference type="HOGENOM" id="CLU_033449_0_2_9"/>
<dbReference type="UniPathway" id="UPA00940"/>
<dbReference type="GO" id="GO:0005829">
    <property type="term" value="C:cytosol"/>
    <property type="evidence" value="ECO:0007669"/>
    <property type="project" value="TreeGrafter"/>
</dbReference>
<dbReference type="GO" id="GO:0047952">
    <property type="term" value="F:glycerol-3-phosphate dehydrogenase [NAD(P)+] activity"/>
    <property type="evidence" value="ECO:0007669"/>
    <property type="project" value="UniProtKB-UniRule"/>
</dbReference>
<dbReference type="GO" id="GO:0051287">
    <property type="term" value="F:NAD binding"/>
    <property type="evidence" value="ECO:0007669"/>
    <property type="project" value="InterPro"/>
</dbReference>
<dbReference type="GO" id="GO:0005975">
    <property type="term" value="P:carbohydrate metabolic process"/>
    <property type="evidence" value="ECO:0007669"/>
    <property type="project" value="InterPro"/>
</dbReference>
<dbReference type="GO" id="GO:0046167">
    <property type="term" value="P:glycerol-3-phosphate biosynthetic process"/>
    <property type="evidence" value="ECO:0007669"/>
    <property type="project" value="UniProtKB-UniRule"/>
</dbReference>
<dbReference type="GO" id="GO:0046168">
    <property type="term" value="P:glycerol-3-phosphate catabolic process"/>
    <property type="evidence" value="ECO:0007669"/>
    <property type="project" value="InterPro"/>
</dbReference>
<dbReference type="GO" id="GO:0006650">
    <property type="term" value="P:glycerophospholipid metabolic process"/>
    <property type="evidence" value="ECO:0007669"/>
    <property type="project" value="UniProtKB-UniRule"/>
</dbReference>
<dbReference type="GO" id="GO:0008654">
    <property type="term" value="P:phospholipid biosynthetic process"/>
    <property type="evidence" value="ECO:0007669"/>
    <property type="project" value="UniProtKB-KW"/>
</dbReference>
<dbReference type="FunFam" id="1.10.1040.10:FF:000001">
    <property type="entry name" value="Glycerol-3-phosphate dehydrogenase [NAD(P)+]"/>
    <property type="match status" value="1"/>
</dbReference>
<dbReference type="FunFam" id="3.40.50.720:FF:000019">
    <property type="entry name" value="Glycerol-3-phosphate dehydrogenase [NAD(P)+]"/>
    <property type="match status" value="1"/>
</dbReference>
<dbReference type="Gene3D" id="1.10.1040.10">
    <property type="entry name" value="N-(1-d-carboxylethyl)-l-norvaline Dehydrogenase, domain 2"/>
    <property type="match status" value="1"/>
</dbReference>
<dbReference type="Gene3D" id="3.40.50.720">
    <property type="entry name" value="NAD(P)-binding Rossmann-like Domain"/>
    <property type="match status" value="1"/>
</dbReference>
<dbReference type="HAMAP" id="MF_00394">
    <property type="entry name" value="NAD_Glyc3P_dehydrog"/>
    <property type="match status" value="1"/>
</dbReference>
<dbReference type="InterPro" id="IPR008927">
    <property type="entry name" value="6-PGluconate_DH-like_C_sf"/>
</dbReference>
<dbReference type="InterPro" id="IPR013328">
    <property type="entry name" value="6PGD_dom2"/>
</dbReference>
<dbReference type="InterPro" id="IPR006168">
    <property type="entry name" value="G3P_DH_NAD-dep"/>
</dbReference>
<dbReference type="InterPro" id="IPR006109">
    <property type="entry name" value="G3P_DH_NAD-dep_C"/>
</dbReference>
<dbReference type="InterPro" id="IPR011128">
    <property type="entry name" value="G3P_DH_NAD-dep_N"/>
</dbReference>
<dbReference type="InterPro" id="IPR036291">
    <property type="entry name" value="NAD(P)-bd_dom_sf"/>
</dbReference>
<dbReference type="NCBIfam" id="NF000940">
    <property type="entry name" value="PRK00094.1-2"/>
    <property type="match status" value="1"/>
</dbReference>
<dbReference type="NCBIfam" id="NF000941">
    <property type="entry name" value="PRK00094.1-3"/>
    <property type="match status" value="1"/>
</dbReference>
<dbReference type="NCBIfam" id="NF000942">
    <property type="entry name" value="PRK00094.1-4"/>
    <property type="match status" value="1"/>
</dbReference>
<dbReference type="PANTHER" id="PTHR11728">
    <property type="entry name" value="GLYCEROL-3-PHOSPHATE DEHYDROGENASE"/>
    <property type="match status" value="1"/>
</dbReference>
<dbReference type="PANTHER" id="PTHR11728:SF1">
    <property type="entry name" value="GLYCEROL-3-PHOSPHATE DEHYDROGENASE [NAD(+)] 2, CHLOROPLASTIC"/>
    <property type="match status" value="1"/>
</dbReference>
<dbReference type="Pfam" id="PF07479">
    <property type="entry name" value="NAD_Gly3P_dh_C"/>
    <property type="match status" value="1"/>
</dbReference>
<dbReference type="Pfam" id="PF01210">
    <property type="entry name" value="NAD_Gly3P_dh_N"/>
    <property type="match status" value="1"/>
</dbReference>
<dbReference type="PIRSF" id="PIRSF000114">
    <property type="entry name" value="Glycerol-3-P_dh"/>
    <property type="match status" value="1"/>
</dbReference>
<dbReference type="PRINTS" id="PR00077">
    <property type="entry name" value="GPDHDRGNASE"/>
</dbReference>
<dbReference type="SUPFAM" id="SSF48179">
    <property type="entry name" value="6-phosphogluconate dehydrogenase C-terminal domain-like"/>
    <property type="match status" value="1"/>
</dbReference>
<dbReference type="SUPFAM" id="SSF51735">
    <property type="entry name" value="NAD(P)-binding Rossmann-fold domains"/>
    <property type="match status" value="1"/>
</dbReference>
<dbReference type="PROSITE" id="PS00957">
    <property type="entry name" value="NAD_G3PDH"/>
    <property type="match status" value="1"/>
</dbReference>
<accession>P64191</accession>
<accession>Q99U16</accession>
<sequence>MTKITVFGMGSFGTALANVLAENGHDVLMWGKNQDAVDELNTCHTNKKYLKYAKLDVNIIATSDMTKAIQFADIYLMALPTKAMREVATQINDKLTSKKTFIHVAKGIENGTFKRVSEMIEDSISPEYNAGIGVLSGPSHAEEVVVKQPTTVAASSKDKSVSKLTQDLFMNDYLRVYTNDDLIGVELGGALKNIIAVASGIVAGIGYGDNAKAALMTRGLAEISRLGEKLGADPMTFLGLGGIGDLIVTCISTHSRNFTLGYKLGQGESMDQALSEMNMVVEGIYTTKSVYHLAKEKNVDMPITNALYRVLFENISVKECVKDLMERDKKSE</sequence>
<gene>
    <name evidence="1" type="primary">gpsA</name>
    <name type="ordered locus">SA1306</name>
</gene>
<proteinExistence type="evidence at protein level"/>
<feature type="chain" id="PRO_0000138025" description="Glycerol-3-phosphate dehydrogenase [NAD(P)+]">
    <location>
        <begin position="1"/>
        <end position="332"/>
    </location>
</feature>
<feature type="active site" description="Proton acceptor" evidence="1">
    <location>
        <position position="192"/>
    </location>
</feature>
<feature type="binding site" evidence="1">
    <location>
        <position position="11"/>
    </location>
    <ligand>
        <name>NADPH</name>
        <dbReference type="ChEBI" id="CHEBI:57783"/>
    </ligand>
</feature>
<feature type="binding site" evidence="1">
    <location>
        <position position="12"/>
    </location>
    <ligand>
        <name>NADPH</name>
        <dbReference type="ChEBI" id="CHEBI:57783"/>
    </ligand>
</feature>
<feature type="binding site" evidence="1">
    <location>
        <position position="32"/>
    </location>
    <ligand>
        <name>NADPH</name>
        <dbReference type="ChEBI" id="CHEBI:57783"/>
    </ligand>
</feature>
<feature type="binding site" evidence="1">
    <location>
        <position position="106"/>
    </location>
    <ligand>
        <name>NADPH</name>
        <dbReference type="ChEBI" id="CHEBI:57783"/>
    </ligand>
</feature>
<feature type="binding site" evidence="1">
    <location>
        <position position="106"/>
    </location>
    <ligand>
        <name>sn-glycerol 3-phosphate</name>
        <dbReference type="ChEBI" id="CHEBI:57597"/>
    </ligand>
</feature>
<feature type="binding site" evidence="1">
    <location>
        <position position="137"/>
    </location>
    <ligand>
        <name>sn-glycerol 3-phosphate</name>
        <dbReference type="ChEBI" id="CHEBI:57597"/>
    </ligand>
</feature>
<feature type="binding site" evidence="1">
    <location>
        <position position="139"/>
    </location>
    <ligand>
        <name>sn-glycerol 3-phosphate</name>
        <dbReference type="ChEBI" id="CHEBI:57597"/>
    </ligand>
</feature>
<feature type="binding site" evidence="1">
    <location>
        <position position="141"/>
    </location>
    <ligand>
        <name>NADPH</name>
        <dbReference type="ChEBI" id="CHEBI:57783"/>
    </ligand>
</feature>
<feature type="binding site" evidence="1">
    <location>
        <position position="192"/>
    </location>
    <ligand>
        <name>sn-glycerol 3-phosphate</name>
        <dbReference type="ChEBI" id="CHEBI:57597"/>
    </ligand>
</feature>
<feature type="binding site" evidence="1">
    <location>
        <position position="245"/>
    </location>
    <ligand>
        <name>sn-glycerol 3-phosphate</name>
        <dbReference type="ChEBI" id="CHEBI:57597"/>
    </ligand>
</feature>
<feature type="binding site" evidence="1">
    <location>
        <position position="255"/>
    </location>
    <ligand>
        <name>sn-glycerol 3-phosphate</name>
        <dbReference type="ChEBI" id="CHEBI:57597"/>
    </ligand>
</feature>
<feature type="binding site" evidence="1">
    <location>
        <position position="256"/>
    </location>
    <ligand>
        <name>NADPH</name>
        <dbReference type="ChEBI" id="CHEBI:57783"/>
    </ligand>
</feature>
<feature type="binding site" evidence="1">
    <location>
        <position position="256"/>
    </location>
    <ligand>
        <name>sn-glycerol 3-phosphate</name>
        <dbReference type="ChEBI" id="CHEBI:57597"/>
    </ligand>
</feature>
<feature type="binding site" evidence="1">
    <location>
        <position position="257"/>
    </location>
    <ligand>
        <name>sn-glycerol 3-phosphate</name>
        <dbReference type="ChEBI" id="CHEBI:57597"/>
    </ligand>
</feature>
<feature type="binding site" evidence="1">
    <location>
        <position position="280"/>
    </location>
    <ligand>
        <name>NADPH</name>
        <dbReference type="ChEBI" id="CHEBI:57783"/>
    </ligand>
</feature>
<feature type="binding site" evidence="1">
    <location>
        <position position="282"/>
    </location>
    <ligand>
        <name>NADPH</name>
        <dbReference type="ChEBI" id="CHEBI:57783"/>
    </ligand>
</feature>
<reference key="1">
    <citation type="journal article" date="2001" name="Lancet">
        <title>Whole genome sequencing of meticillin-resistant Staphylococcus aureus.</title>
        <authorList>
            <person name="Kuroda M."/>
            <person name="Ohta T."/>
            <person name="Uchiyama I."/>
            <person name="Baba T."/>
            <person name="Yuzawa H."/>
            <person name="Kobayashi I."/>
            <person name="Cui L."/>
            <person name="Oguchi A."/>
            <person name="Aoki K."/>
            <person name="Nagai Y."/>
            <person name="Lian J.-Q."/>
            <person name="Ito T."/>
            <person name="Kanamori M."/>
            <person name="Matsumaru H."/>
            <person name="Maruyama A."/>
            <person name="Murakami H."/>
            <person name="Hosoyama A."/>
            <person name="Mizutani-Ui Y."/>
            <person name="Takahashi N.K."/>
            <person name="Sawano T."/>
            <person name="Inoue R."/>
            <person name="Kaito C."/>
            <person name="Sekimizu K."/>
            <person name="Hirakawa H."/>
            <person name="Kuhara S."/>
            <person name="Goto S."/>
            <person name="Yabuzaki J."/>
            <person name="Kanehisa M."/>
            <person name="Yamashita A."/>
            <person name="Oshima K."/>
            <person name="Furuya K."/>
            <person name="Yoshino C."/>
            <person name="Shiba T."/>
            <person name="Hattori M."/>
            <person name="Ogasawara N."/>
            <person name="Hayashi H."/>
            <person name="Hiramatsu K."/>
        </authorList>
    </citation>
    <scope>NUCLEOTIDE SEQUENCE [LARGE SCALE GENOMIC DNA]</scope>
    <source>
        <strain>N315</strain>
    </source>
</reference>
<reference key="2">
    <citation type="submission" date="2007-10" db="UniProtKB">
        <title>Shotgun proteomic analysis of total and membrane protein extracts of S. aureus strain N315.</title>
        <authorList>
            <person name="Vaezzadeh A.R."/>
            <person name="Deshusses J."/>
            <person name="Lescuyer P."/>
            <person name="Hochstrasser D.F."/>
        </authorList>
    </citation>
    <scope>IDENTIFICATION BY MASS SPECTROMETRY [LARGE SCALE ANALYSIS]</scope>
    <source>
        <strain>N315</strain>
    </source>
</reference>
<name>GPDA_STAAN</name>